<accession>P66126</accession>
<accession>Q92BH4</accession>
<sequence length="96" mass="10551">MLKFDIQHFAHKKGGGSTSNGRDSESKRLGAKRADGQFVTGGSILYRQRGTKIYPGTNVGRGGDDTLFAKTDGVVRFERMGRDKKKVSVYPEVQEA</sequence>
<feature type="propeptide" id="PRO_0000459908" evidence="1">
    <location>
        <begin position="1"/>
        <end position="9"/>
    </location>
</feature>
<feature type="chain" id="PRO_0000181113" description="Large ribosomal subunit protein bL27">
    <location>
        <begin position="10"/>
        <end position="96"/>
    </location>
</feature>
<feature type="region of interest" description="Disordered" evidence="3">
    <location>
        <begin position="1"/>
        <end position="33"/>
    </location>
</feature>
<feature type="compositionally biased region" description="Basic and acidic residues" evidence="3">
    <location>
        <begin position="22"/>
        <end position="33"/>
    </location>
</feature>
<organism>
    <name type="scientific">Listeria innocua serovar 6a (strain ATCC BAA-680 / CLIP 11262)</name>
    <dbReference type="NCBI Taxonomy" id="272626"/>
    <lineage>
        <taxon>Bacteria</taxon>
        <taxon>Bacillati</taxon>
        <taxon>Bacillota</taxon>
        <taxon>Bacilli</taxon>
        <taxon>Bacillales</taxon>
        <taxon>Listeriaceae</taxon>
        <taxon>Listeria</taxon>
    </lineage>
</organism>
<comment type="PTM">
    <text evidence="1">The N-terminus is cleaved by ribosomal processing cysteine protease Prp.</text>
</comment>
<comment type="similarity">
    <text evidence="2">Belongs to the bacterial ribosomal protein bL27 family.</text>
</comment>
<gene>
    <name evidence="2" type="primary">rpmA</name>
    <name type="ordered locus">lin1575</name>
</gene>
<reference key="1">
    <citation type="journal article" date="2001" name="Science">
        <title>Comparative genomics of Listeria species.</title>
        <authorList>
            <person name="Glaser P."/>
            <person name="Frangeul L."/>
            <person name="Buchrieser C."/>
            <person name="Rusniok C."/>
            <person name="Amend A."/>
            <person name="Baquero F."/>
            <person name="Berche P."/>
            <person name="Bloecker H."/>
            <person name="Brandt P."/>
            <person name="Chakraborty T."/>
            <person name="Charbit A."/>
            <person name="Chetouani F."/>
            <person name="Couve E."/>
            <person name="de Daruvar A."/>
            <person name="Dehoux P."/>
            <person name="Domann E."/>
            <person name="Dominguez-Bernal G."/>
            <person name="Duchaud E."/>
            <person name="Durant L."/>
            <person name="Dussurget O."/>
            <person name="Entian K.-D."/>
            <person name="Fsihi H."/>
            <person name="Garcia-del Portillo F."/>
            <person name="Garrido P."/>
            <person name="Gautier L."/>
            <person name="Goebel W."/>
            <person name="Gomez-Lopez N."/>
            <person name="Hain T."/>
            <person name="Hauf J."/>
            <person name="Jackson D."/>
            <person name="Jones L.-M."/>
            <person name="Kaerst U."/>
            <person name="Kreft J."/>
            <person name="Kuhn M."/>
            <person name="Kunst F."/>
            <person name="Kurapkat G."/>
            <person name="Madueno E."/>
            <person name="Maitournam A."/>
            <person name="Mata Vicente J."/>
            <person name="Ng E."/>
            <person name="Nedjari H."/>
            <person name="Nordsiek G."/>
            <person name="Novella S."/>
            <person name="de Pablos B."/>
            <person name="Perez-Diaz J.-C."/>
            <person name="Purcell R."/>
            <person name="Remmel B."/>
            <person name="Rose M."/>
            <person name="Schlueter T."/>
            <person name="Simoes N."/>
            <person name="Tierrez A."/>
            <person name="Vazquez-Boland J.-A."/>
            <person name="Voss H."/>
            <person name="Wehland J."/>
            <person name="Cossart P."/>
        </authorList>
    </citation>
    <scope>NUCLEOTIDE SEQUENCE [LARGE SCALE GENOMIC DNA]</scope>
    <source>
        <strain>ATCC BAA-680 / CLIP 11262</strain>
    </source>
</reference>
<protein>
    <recommendedName>
        <fullName evidence="2">Large ribosomal subunit protein bL27</fullName>
    </recommendedName>
    <alternativeName>
        <fullName evidence="4">50S ribosomal protein L27</fullName>
    </alternativeName>
</protein>
<name>RL27_LISIN</name>
<proteinExistence type="inferred from homology"/>
<evidence type="ECO:0000250" key="1">
    <source>
        <dbReference type="UniProtKB" id="Q2FXT0"/>
    </source>
</evidence>
<evidence type="ECO:0000255" key="2">
    <source>
        <dbReference type="HAMAP-Rule" id="MF_00539"/>
    </source>
</evidence>
<evidence type="ECO:0000256" key="3">
    <source>
        <dbReference type="SAM" id="MobiDB-lite"/>
    </source>
</evidence>
<evidence type="ECO:0000305" key="4"/>
<dbReference type="EMBL" id="AL596169">
    <property type="protein sequence ID" value="CAC96806.1"/>
    <property type="molecule type" value="Genomic_DNA"/>
</dbReference>
<dbReference type="PIR" id="AF1629">
    <property type="entry name" value="AF1629"/>
</dbReference>
<dbReference type="RefSeq" id="WP_003726866.1">
    <property type="nucleotide sequence ID" value="NC_003212.1"/>
</dbReference>
<dbReference type="SMR" id="P66126"/>
<dbReference type="STRING" id="272626.gene:17565906"/>
<dbReference type="GeneID" id="93239419"/>
<dbReference type="KEGG" id="lin:rpmA"/>
<dbReference type="eggNOG" id="COG0211">
    <property type="taxonomic scope" value="Bacteria"/>
</dbReference>
<dbReference type="HOGENOM" id="CLU_095424_4_0_9"/>
<dbReference type="OrthoDB" id="9803474at2"/>
<dbReference type="Proteomes" id="UP000002513">
    <property type="component" value="Chromosome"/>
</dbReference>
<dbReference type="GO" id="GO:0022625">
    <property type="term" value="C:cytosolic large ribosomal subunit"/>
    <property type="evidence" value="ECO:0007669"/>
    <property type="project" value="TreeGrafter"/>
</dbReference>
<dbReference type="GO" id="GO:0003735">
    <property type="term" value="F:structural constituent of ribosome"/>
    <property type="evidence" value="ECO:0007669"/>
    <property type="project" value="InterPro"/>
</dbReference>
<dbReference type="GO" id="GO:0006412">
    <property type="term" value="P:translation"/>
    <property type="evidence" value="ECO:0007669"/>
    <property type="project" value="UniProtKB-UniRule"/>
</dbReference>
<dbReference type="FunFam" id="2.40.50.100:FF:000004">
    <property type="entry name" value="50S ribosomal protein L27"/>
    <property type="match status" value="1"/>
</dbReference>
<dbReference type="Gene3D" id="2.40.50.100">
    <property type="match status" value="1"/>
</dbReference>
<dbReference type="HAMAP" id="MF_00539">
    <property type="entry name" value="Ribosomal_bL27"/>
    <property type="match status" value="1"/>
</dbReference>
<dbReference type="InterPro" id="IPR001684">
    <property type="entry name" value="Ribosomal_bL27"/>
</dbReference>
<dbReference type="InterPro" id="IPR018261">
    <property type="entry name" value="Ribosomal_bL27_CS"/>
</dbReference>
<dbReference type="NCBIfam" id="TIGR00062">
    <property type="entry name" value="L27"/>
    <property type="match status" value="1"/>
</dbReference>
<dbReference type="PANTHER" id="PTHR15893:SF0">
    <property type="entry name" value="LARGE RIBOSOMAL SUBUNIT PROTEIN BL27M"/>
    <property type="match status" value="1"/>
</dbReference>
<dbReference type="PANTHER" id="PTHR15893">
    <property type="entry name" value="RIBOSOMAL PROTEIN L27"/>
    <property type="match status" value="1"/>
</dbReference>
<dbReference type="Pfam" id="PF01016">
    <property type="entry name" value="Ribosomal_L27"/>
    <property type="match status" value="1"/>
</dbReference>
<dbReference type="PRINTS" id="PR00063">
    <property type="entry name" value="RIBOSOMALL27"/>
</dbReference>
<dbReference type="SUPFAM" id="SSF110324">
    <property type="entry name" value="Ribosomal L27 protein-like"/>
    <property type="match status" value="1"/>
</dbReference>
<dbReference type="PROSITE" id="PS00831">
    <property type="entry name" value="RIBOSOMAL_L27"/>
    <property type="match status" value="1"/>
</dbReference>
<keyword id="KW-0687">Ribonucleoprotein</keyword>
<keyword id="KW-0689">Ribosomal protein</keyword>